<reference key="1">
    <citation type="journal article" date="2005" name="Genome Res.">
        <title>Coping with cold: the genome of the versatile marine Antarctica bacterium Pseudoalteromonas haloplanktis TAC125.</title>
        <authorList>
            <person name="Medigue C."/>
            <person name="Krin E."/>
            <person name="Pascal G."/>
            <person name="Barbe V."/>
            <person name="Bernsel A."/>
            <person name="Bertin P.N."/>
            <person name="Cheung F."/>
            <person name="Cruveiller S."/>
            <person name="D'Amico S."/>
            <person name="Duilio A."/>
            <person name="Fang G."/>
            <person name="Feller G."/>
            <person name="Ho C."/>
            <person name="Mangenot S."/>
            <person name="Marino G."/>
            <person name="Nilsson J."/>
            <person name="Parrilli E."/>
            <person name="Rocha E.P.C."/>
            <person name="Rouy Z."/>
            <person name="Sekowska A."/>
            <person name="Tutino M.L."/>
            <person name="Vallenet D."/>
            <person name="von Heijne G."/>
            <person name="Danchin A."/>
        </authorList>
    </citation>
    <scope>NUCLEOTIDE SEQUENCE [LARGE SCALE GENOMIC DNA]</scope>
    <source>
        <strain>TAC 125</strain>
    </source>
</reference>
<gene>
    <name evidence="1" type="primary">bioB</name>
    <name type="ordered locus">PSHAa1609</name>
</gene>
<dbReference type="EC" id="2.8.1.6" evidence="1"/>
<dbReference type="EMBL" id="CR954246">
    <property type="protein sequence ID" value="CAI86682.1"/>
    <property type="molecule type" value="Genomic_DNA"/>
</dbReference>
<dbReference type="SMR" id="Q3IGS6"/>
<dbReference type="STRING" id="326442.PSHAa1609"/>
<dbReference type="KEGG" id="pha:PSHAa1609"/>
<dbReference type="PATRIC" id="fig|326442.8.peg.1556"/>
<dbReference type="eggNOG" id="COG0502">
    <property type="taxonomic scope" value="Bacteria"/>
</dbReference>
<dbReference type="HOGENOM" id="CLU_033172_1_2_6"/>
<dbReference type="BioCyc" id="PHAL326442:PSHA_RS07890-MONOMER"/>
<dbReference type="UniPathway" id="UPA00078">
    <property type="reaction ID" value="UER00162"/>
</dbReference>
<dbReference type="Proteomes" id="UP000006843">
    <property type="component" value="Chromosome I"/>
</dbReference>
<dbReference type="GO" id="GO:0051537">
    <property type="term" value="F:2 iron, 2 sulfur cluster binding"/>
    <property type="evidence" value="ECO:0007669"/>
    <property type="project" value="UniProtKB-KW"/>
</dbReference>
<dbReference type="GO" id="GO:0051539">
    <property type="term" value="F:4 iron, 4 sulfur cluster binding"/>
    <property type="evidence" value="ECO:0007669"/>
    <property type="project" value="UniProtKB-KW"/>
</dbReference>
<dbReference type="GO" id="GO:0004076">
    <property type="term" value="F:biotin synthase activity"/>
    <property type="evidence" value="ECO:0007669"/>
    <property type="project" value="UniProtKB-UniRule"/>
</dbReference>
<dbReference type="GO" id="GO:0005506">
    <property type="term" value="F:iron ion binding"/>
    <property type="evidence" value="ECO:0007669"/>
    <property type="project" value="UniProtKB-UniRule"/>
</dbReference>
<dbReference type="GO" id="GO:0009102">
    <property type="term" value="P:biotin biosynthetic process"/>
    <property type="evidence" value="ECO:0007669"/>
    <property type="project" value="UniProtKB-UniRule"/>
</dbReference>
<dbReference type="CDD" id="cd01335">
    <property type="entry name" value="Radical_SAM"/>
    <property type="match status" value="1"/>
</dbReference>
<dbReference type="FunFam" id="3.20.20.70:FF:000011">
    <property type="entry name" value="Biotin synthase"/>
    <property type="match status" value="1"/>
</dbReference>
<dbReference type="Gene3D" id="3.20.20.70">
    <property type="entry name" value="Aldolase class I"/>
    <property type="match status" value="1"/>
</dbReference>
<dbReference type="HAMAP" id="MF_01694">
    <property type="entry name" value="BioB"/>
    <property type="match status" value="1"/>
</dbReference>
<dbReference type="InterPro" id="IPR013785">
    <property type="entry name" value="Aldolase_TIM"/>
</dbReference>
<dbReference type="InterPro" id="IPR010722">
    <property type="entry name" value="BATS_dom"/>
</dbReference>
<dbReference type="InterPro" id="IPR002684">
    <property type="entry name" value="Biotin_synth/BioAB"/>
</dbReference>
<dbReference type="InterPro" id="IPR024177">
    <property type="entry name" value="Biotin_synthase"/>
</dbReference>
<dbReference type="InterPro" id="IPR006638">
    <property type="entry name" value="Elp3/MiaA/NifB-like_rSAM"/>
</dbReference>
<dbReference type="InterPro" id="IPR007197">
    <property type="entry name" value="rSAM"/>
</dbReference>
<dbReference type="NCBIfam" id="TIGR00433">
    <property type="entry name" value="bioB"/>
    <property type="match status" value="1"/>
</dbReference>
<dbReference type="PANTHER" id="PTHR22976">
    <property type="entry name" value="BIOTIN SYNTHASE"/>
    <property type="match status" value="1"/>
</dbReference>
<dbReference type="PANTHER" id="PTHR22976:SF2">
    <property type="entry name" value="BIOTIN SYNTHASE, MITOCHONDRIAL"/>
    <property type="match status" value="1"/>
</dbReference>
<dbReference type="Pfam" id="PF06968">
    <property type="entry name" value="BATS"/>
    <property type="match status" value="1"/>
</dbReference>
<dbReference type="Pfam" id="PF04055">
    <property type="entry name" value="Radical_SAM"/>
    <property type="match status" value="1"/>
</dbReference>
<dbReference type="PIRSF" id="PIRSF001619">
    <property type="entry name" value="Biotin_synth"/>
    <property type="match status" value="1"/>
</dbReference>
<dbReference type="SFLD" id="SFLDF00272">
    <property type="entry name" value="biotin_synthase"/>
    <property type="match status" value="1"/>
</dbReference>
<dbReference type="SFLD" id="SFLDS00029">
    <property type="entry name" value="Radical_SAM"/>
    <property type="match status" value="1"/>
</dbReference>
<dbReference type="SMART" id="SM00876">
    <property type="entry name" value="BATS"/>
    <property type="match status" value="1"/>
</dbReference>
<dbReference type="SMART" id="SM00729">
    <property type="entry name" value="Elp3"/>
    <property type="match status" value="1"/>
</dbReference>
<dbReference type="SUPFAM" id="SSF102114">
    <property type="entry name" value="Radical SAM enzymes"/>
    <property type="match status" value="1"/>
</dbReference>
<dbReference type="PROSITE" id="PS51918">
    <property type="entry name" value="RADICAL_SAM"/>
    <property type="match status" value="1"/>
</dbReference>
<accession>Q3IGS6</accession>
<comment type="function">
    <text evidence="1">Catalyzes the conversion of dethiobiotin (DTB) to biotin by the insertion of a sulfur atom into dethiobiotin via a radical-based mechanism.</text>
</comment>
<comment type="catalytic activity">
    <reaction evidence="1">
        <text>(4R,5S)-dethiobiotin + (sulfur carrier)-SH + 2 reduced [2Fe-2S]-[ferredoxin] + 2 S-adenosyl-L-methionine = (sulfur carrier)-H + biotin + 2 5'-deoxyadenosine + 2 L-methionine + 2 oxidized [2Fe-2S]-[ferredoxin]</text>
        <dbReference type="Rhea" id="RHEA:22060"/>
        <dbReference type="Rhea" id="RHEA-COMP:10000"/>
        <dbReference type="Rhea" id="RHEA-COMP:10001"/>
        <dbReference type="Rhea" id="RHEA-COMP:14737"/>
        <dbReference type="Rhea" id="RHEA-COMP:14739"/>
        <dbReference type="ChEBI" id="CHEBI:17319"/>
        <dbReference type="ChEBI" id="CHEBI:29917"/>
        <dbReference type="ChEBI" id="CHEBI:33737"/>
        <dbReference type="ChEBI" id="CHEBI:33738"/>
        <dbReference type="ChEBI" id="CHEBI:57586"/>
        <dbReference type="ChEBI" id="CHEBI:57844"/>
        <dbReference type="ChEBI" id="CHEBI:59789"/>
        <dbReference type="ChEBI" id="CHEBI:64428"/>
        <dbReference type="ChEBI" id="CHEBI:149473"/>
        <dbReference type="EC" id="2.8.1.6"/>
    </reaction>
</comment>
<comment type="cofactor">
    <cofactor evidence="1">
        <name>[4Fe-4S] cluster</name>
        <dbReference type="ChEBI" id="CHEBI:49883"/>
    </cofactor>
    <text evidence="1">Binds 1 [4Fe-4S] cluster. The cluster is coordinated with 3 cysteines and an exchangeable S-adenosyl-L-methionine.</text>
</comment>
<comment type="cofactor">
    <cofactor evidence="1">
        <name>[2Fe-2S] cluster</name>
        <dbReference type="ChEBI" id="CHEBI:190135"/>
    </cofactor>
    <text evidence="1">Binds 1 [2Fe-2S] cluster. The cluster is coordinated with 3 cysteines and 1 arginine.</text>
</comment>
<comment type="pathway">
    <text evidence="1">Cofactor biosynthesis; biotin biosynthesis; biotin from 7,8-diaminononanoate: step 2/2.</text>
</comment>
<comment type="subunit">
    <text evidence="1">Homodimer.</text>
</comment>
<comment type="similarity">
    <text evidence="1">Belongs to the radical SAM superfamily. Biotin synthase family.</text>
</comment>
<organism>
    <name type="scientific">Pseudoalteromonas translucida (strain TAC 125)</name>
    <dbReference type="NCBI Taxonomy" id="326442"/>
    <lineage>
        <taxon>Bacteria</taxon>
        <taxon>Pseudomonadati</taxon>
        <taxon>Pseudomonadota</taxon>
        <taxon>Gammaproteobacteria</taxon>
        <taxon>Alteromonadales</taxon>
        <taxon>Pseudoalteromonadaceae</taxon>
        <taxon>Pseudoalteromonas</taxon>
    </lineage>
</organism>
<keyword id="KW-0001">2Fe-2S</keyword>
<keyword id="KW-0004">4Fe-4S</keyword>
<keyword id="KW-0093">Biotin biosynthesis</keyword>
<keyword id="KW-0408">Iron</keyword>
<keyword id="KW-0411">Iron-sulfur</keyword>
<keyword id="KW-0479">Metal-binding</keyword>
<keyword id="KW-1185">Reference proteome</keyword>
<keyword id="KW-0949">S-adenosyl-L-methionine</keyword>
<keyword id="KW-0808">Transferase</keyword>
<evidence type="ECO:0000255" key="1">
    <source>
        <dbReference type="HAMAP-Rule" id="MF_01694"/>
    </source>
</evidence>
<evidence type="ECO:0000255" key="2">
    <source>
        <dbReference type="PROSITE-ProRule" id="PRU01266"/>
    </source>
</evidence>
<protein>
    <recommendedName>
        <fullName evidence="1">Biotin synthase</fullName>
        <ecNumber evidence="1">2.8.1.6</ecNumber>
    </recommendedName>
</protein>
<name>BIOB_PSET1</name>
<sequence>MELAPVRHNWTHSEVKAIFEMPFNDLLFKAASVHRANFNPNEVQISTLLSIKTGACPEDCKYCPQSGHYRTDLERERLIEVEKVVEQARLAKQKGATRFCMGAAWSDPKDRDMPYISQMVKEVKELGLETCMTLGMLNNEKAHELRNAGLDYYNHNLDTSPEYYEQIISTRTFQDRLDTIGNVRDAGMKVCSGGIVGMGEQAADRYGLLMQLANLDQQPESVPINMLVKVKGTPLENVDDLDHFEFIRTIATARIMMPHSYVRLSAGRNAMNEQMQSMCFFAGANSIFYGDKLLTTENPDADADMALIKKLGMNPETRHDYSDEAVAASLSSQVADKATSKLFYEA</sequence>
<proteinExistence type="inferred from homology"/>
<feature type="chain" id="PRO_0000381558" description="Biotin synthase">
    <location>
        <begin position="1"/>
        <end position="346"/>
    </location>
</feature>
<feature type="domain" description="Radical SAM core" evidence="2">
    <location>
        <begin position="41"/>
        <end position="265"/>
    </location>
</feature>
<feature type="binding site" evidence="1">
    <location>
        <position position="56"/>
    </location>
    <ligand>
        <name>[4Fe-4S] cluster</name>
        <dbReference type="ChEBI" id="CHEBI:49883"/>
        <note>4Fe-4S-S-AdoMet</note>
    </ligand>
</feature>
<feature type="binding site" evidence="1">
    <location>
        <position position="60"/>
    </location>
    <ligand>
        <name>[4Fe-4S] cluster</name>
        <dbReference type="ChEBI" id="CHEBI:49883"/>
        <note>4Fe-4S-S-AdoMet</note>
    </ligand>
</feature>
<feature type="binding site" evidence="1">
    <location>
        <position position="63"/>
    </location>
    <ligand>
        <name>[4Fe-4S] cluster</name>
        <dbReference type="ChEBI" id="CHEBI:49883"/>
        <note>4Fe-4S-S-AdoMet</note>
    </ligand>
</feature>
<feature type="binding site" evidence="1">
    <location>
        <position position="100"/>
    </location>
    <ligand>
        <name>[2Fe-2S] cluster</name>
        <dbReference type="ChEBI" id="CHEBI:190135"/>
    </ligand>
</feature>
<feature type="binding site" evidence="1">
    <location>
        <position position="131"/>
    </location>
    <ligand>
        <name>[2Fe-2S] cluster</name>
        <dbReference type="ChEBI" id="CHEBI:190135"/>
    </ligand>
</feature>
<feature type="binding site" evidence="1">
    <location>
        <position position="191"/>
    </location>
    <ligand>
        <name>[2Fe-2S] cluster</name>
        <dbReference type="ChEBI" id="CHEBI:190135"/>
    </ligand>
</feature>
<feature type="binding site" evidence="1">
    <location>
        <position position="263"/>
    </location>
    <ligand>
        <name>[2Fe-2S] cluster</name>
        <dbReference type="ChEBI" id="CHEBI:190135"/>
    </ligand>
</feature>